<organism>
    <name type="scientific">Salmonella typhi</name>
    <dbReference type="NCBI Taxonomy" id="90370"/>
    <lineage>
        <taxon>Bacteria</taxon>
        <taxon>Pseudomonadati</taxon>
        <taxon>Pseudomonadota</taxon>
        <taxon>Gammaproteobacteria</taxon>
        <taxon>Enterobacterales</taxon>
        <taxon>Enterobacteriaceae</taxon>
        <taxon>Salmonella</taxon>
    </lineage>
</organism>
<comment type="function">
    <text evidence="1">Catalyzes the proton-dependent transport of sialic acid.</text>
</comment>
<comment type="catalytic activity">
    <reaction evidence="1">
        <text>N-acetylneuraminate(in) + H(+)(in) = N-acetylneuraminate(out) + H(+)(out)</text>
        <dbReference type="Rhea" id="RHEA:28987"/>
        <dbReference type="ChEBI" id="CHEBI:15378"/>
        <dbReference type="ChEBI" id="CHEBI:35418"/>
    </reaction>
</comment>
<comment type="subcellular location">
    <subcellularLocation>
        <location evidence="1">Cell inner membrane</location>
        <topology evidence="1">Multi-pass membrane protein</topology>
    </subcellularLocation>
</comment>
<comment type="similarity">
    <text evidence="1">Belongs to the major facilitator superfamily. Sialate:H(+) symporter (SHS) (TC 2.A.1.12) family.</text>
</comment>
<accession>P0A2G6</accession>
<accession>Q8XFJ3</accession>
<protein>
    <recommendedName>
        <fullName evidence="1">Sialic acid transporter NanT</fullName>
    </recommendedName>
    <alternativeName>
        <fullName evidence="1">Sialic acid permease</fullName>
    </alternativeName>
    <alternativeName>
        <fullName evidence="1">Sialic acid/H(+) symporter</fullName>
    </alternativeName>
</protein>
<sequence>MSTSTQNIPWYRHLNRAQWRAFSAAWLGYLLDGFDFVLIALVLTEVQSEFGLTTVQAASLISAAFISRWFGGLLLGAMGDRYGRRLAMVSSIILFSVGTLACGFAPGYTTMFIARLVIGMGMAGEYGSSATYVIESWPKHLRNKASGFLISGFSVGAVVAAQVYSLVVPVWGWRALFFIGILPIIFALWLRKNIPEAEDWKEKHAGKAPVRTMVDILYRGEHRIINILMTFAAAAALWFCFAGNLQNAAIVAGLGLLCAVIFISFMVQSSGKRWPTGVMLMLVVLFAFLYSWPIQALLPTYLKTELAYDPHTVANVLFFSGFGAAVGCCVGGFLGDWLGTRKAYVCSLLASQILIIPVFAIGGTNVWVLGLLLFFQQMLGQGIAGILPKLIGGYFDTDQRAAGLGFTYNVGALGGALAPILGALIAQRLDLGTALASLSFSLTFVVILLIGLDMPSRVQRWLRPEALRTHDAIDDKPFSGAVPLGSGKGAFVKTKS</sequence>
<reference key="1">
    <citation type="journal article" date="2001" name="Nature">
        <title>Complete genome sequence of a multiple drug resistant Salmonella enterica serovar Typhi CT18.</title>
        <authorList>
            <person name="Parkhill J."/>
            <person name="Dougan G."/>
            <person name="James K.D."/>
            <person name="Thomson N.R."/>
            <person name="Pickard D."/>
            <person name="Wain J."/>
            <person name="Churcher C.M."/>
            <person name="Mungall K.L."/>
            <person name="Bentley S.D."/>
            <person name="Holden M.T.G."/>
            <person name="Sebaihia M."/>
            <person name="Baker S."/>
            <person name="Basham D."/>
            <person name="Brooks K."/>
            <person name="Chillingworth T."/>
            <person name="Connerton P."/>
            <person name="Cronin A."/>
            <person name="Davis P."/>
            <person name="Davies R.M."/>
            <person name="Dowd L."/>
            <person name="White N."/>
            <person name="Farrar J."/>
            <person name="Feltwell T."/>
            <person name="Hamlin N."/>
            <person name="Haque A."/>
            <person name="Hien T.T."/>
            <person name="Holroyd S."/>
            <person name="Jagels K."/>
            <person name="Krogh A."/>
            <person name="Larsen T.S."/>
            <person name="Leather S."/>
            <person name="Moule S."/>
            <person name="O'Gaora P."/>
            <person name="Parry C."/>
            <person name="Quail M.A."/>
            <person name="Rutherford K.M."/>
            <person name="Simmonds M."/>
            <person name="Skelton J."/>
            <person name="Stevens K."/>
            <person name="Whitehead S."/>
            <person name="Barrell B.G."/>
        </authorList>
    </citation>
    <scope>NUCLEOTIDE SEQUENCE [LARGE SCALE GENOMIC DNA]</scope>
    <source>
        <strain>CT18</strain>
    </source>
</reference>
<reference key="2">
    <citation type="journal article" date="2003" name="J. Bacteriol.">
        <title>Comparative genomics of Salmonella enterica serovar Typhi strains Ty2 and CT18.</title>
        <authorList>
            <person name="Deng W."/>
            <person name="Liou S.-R."/>
            <person name="Plunkett G. III"/>
            <person name="Mayhew G.F."/>
            <person name="Rose D.J."/>
            <person name="Burland V."/>
            <person name="Kodoyianni V."/>
            <person name="Schwartz D.C."/>
            <person name="Blattner F.R."/>
        </authorList>
    </citation>
    <scope>NUCLEOTIDE SEQUENCE [LARGE SCALE GENOMIC DNA]</scope>
    <source>
        <strain>ATCC 700931 / Ty2</strain>
    </source>
</reference>
<gene>
    <name evidence="1" type="primary">nanT</name>
    <name type="ordered locus">STY3519</name>
    <name type="ordered locus">t3255</name>
</gene>
<feature type="chain" id="PRO_0000050315" description="Sialic acid transporter NanT">
    <location>
        <begin position="1"/>
        <end position="496"/>
    </location>
</feature>
<feature type="transmembrane region" description="Helical" evidence="1">
    <location>
        <begin position="22"/>
        <end position="42"/>
    </location>
</feature>
<feature type="transmembrane region" description="Helical" evidence="1">
    <location>
        <begin position="58"/>
        <end position="78"/>
    </location>
</feature>
<feature type="transmembrane region" description="Helical" evidence="1">
    <location>
        <begin position="86"/>
        <end position="106"/>
    </location>
</feature>
<feature type="transmembrane region" description="Helical" evidence="1">
    <location>
        <begin position="116"/>
        <end position="136"/>
    </location>
</feature>
<feature type="transmembrane region" description="Helical" evidence="1">
    <location>
        <begin position="148"/>
        <end position="168"/>
    </location>
</feature>
<feature type="transmembrane region" description="Helical" evidence="1">
    <location>
        <begin position="170"/>
        <end position="190"/>
    </location>
</feature>
<feature type="transmembrane region" description="Helical" evidence="1">
    <location>
        <begin position="224"/>
        <end position="244"/>
    </location>
</feature>
<feature type="transmembrane region" description="Helical" evidence="1">
    <location>
        <begin position="247"/>
        <end position="267"/>
    </location>
</feature>
<feature type="transmembrane region" description="Helical" evidence="1">
    <location>
        <begin position="278"/>
        <end position="298"/>
    </location>
</feature>
<feature type="transmembrane region" description="Helical" evidence="1">
    <location>
        <begin position="313"/>
        <end position="333"/>
    </location>
</feature>
<feature type="transmembrane region" description="Helical" evidence="1">
    <location>
        <begin position="353"/>
        <end position="373"/>
    </location>
</feature>
<feature type="transmembrane region" description="Helical" evidence="1">
    <location>
        <begin position="374"/>
        <end position="394"/>
    </location>
</feature>
<feature type="transmembrane region" description="Helical" evidence="1">
    <location>
        <begin position="406"/>
        <end position="426"/>
    </location>
</feature>
<feature type="transmembrane region" description="Helical" evidence="1">
    <location>
        <begin position="431"/>
        <end position="451"/>
    </location>
</feature>
<feature type="sequence conflict" description="In Ref. 2; AAO70790." evidence="2" ref="2">
    <original>P</original>
    <variation>T</variation>
    <location>
        <position position="477"/>
    </location>
</feature>
<evidence type="ECO:0000255" key="1">
    <source>
        <dbReference type="HAMAP-Rule" id="MF_01238"/>
    </source>
</evidence>
<evidence type="ECO:0000305" key="2"/>
<dbReference type="EMBL" id="AL513382">
    <property type="protein sequence ID" value="CAD07855.1"/>
    <property type="molecule type" value="Genomic_DNA"/>
</dbReference>
<dbReference type="EMBL" id="AE014613">
    <property type="protein sequence ID" value="AAO70790.1"/>
    <property type="molecule type" value="Genomic_DNA"/>
</dbReference>
<dbReference type="RefSeq" id="NP_457716.1">
    <property type="nucleotide sequence ID" value="NC_003198.1"/>
</dbReference>
<dbReference type="RefSeq" id="WP_000108071.1">
    <property type="nucleotide sequence ID" value="NZ_WSUR01000003.1"/>
</dbReference>
<dbReference type="SMR" id="P0A2G6"/>
<dbReference type="STRING" id="220341.gene:17587368"/>
<dbReference type="KEGG" id="stt:t3255"/>
<dbReference type="KEGG" id="sty:STY3519"/>
<dbReference type="PATRIC" id="fig|220341.7.peg.3582"/>
<dbReference type="eggNOG" id="COG2814">
    <property type="taxonomic scope" value="Bacteria"/>
</dbReference>
<dbReference type="HOGENOM" id="CLU_001265_46_8_6"/>
<dbReference type="OMA" id="SDITWGI"/>
<dbReference type="OrthoDB" id="4474610at2"/>
<dbReference type="Proteomes" id="UP000000541">
    <property type="component" value="Chromosome"/>
</dbReference>
<dbReference type="Proteomes" id="UP000002670">
    <property type="component" value="Chromosome"/>
</dbReference>
<dbReference type="GO" id="GO:0005886">
    <property type="term" value="C:plasma membrane"/>
    <property type="evidence" value="ECO:0007669"/>
    <property type="project" value="UniProtKB-SubCell"/>
</dbReference>
<dbReference type="GO" id="GO:0046943">
    <property type="term" value="F:carboxylic acid transmembrane transporter activity"/>
    <property type="evidence" value="ECO:0007669"/>
    <property type="project" value="TreeGrafter"/>
</dbReference>
<dbReference type="GO" id="GO:0015538">
    <property type="term" value="F:sialic acid:proton symporter activity"/>
    <property type="evidence" value="ECO:0007669"/>
    <property type="project" value="UniProtKB-UniRule"/>
</dbReference>
<dbReference type="CDD" id="cd17316">
    <property type="entry name" value="MFS_SV2_like"/>
    <property type="match status" value="1"/>
</dbReference>
<dbReference type="FunFam" id="1.20.1250.20:FF:000027">
    <property type="entry name" value="Sialic acid transporter NanT"/>
    <property type="match status" value="1"/>
</dbReference>
<dbReference type="FunFam" id="1.20.1250.20:FF:000038">
    <property type="entry name" value="Sialic acid transporter NanT"/>
    <property type="match status" value="1"/>
</dbReference>
<dbReference type="Gene3D" id="1.20.1250.20">
    <property type="entry name" value="MFS general substrate transporter like domains"/>
    <property type="match status" value="2"/>
</dbReference>
<dbReference type="HAMAP" id="MF_01238">
    <property type="entry name" value="MFS_NanT"/>
    <property type="match status" value="1"/>
</dbReference>
<dbReference type="InterPro" id="IPR011701">
    <property type="entry name" value="MFS"/>
</dbReference>
<dbReference type="InterPro" id="IPR020846">
    <property type="entry name" value="MFS_dom"/>
</dbReference>
<dbReference type="InterPro" id="IPR036259">
    <property type="entry name" value="MFS_trans_sf"/>
</dbReference>
<dbReference type="InterPro" id="IPR004742">
    <property type="entry name" value="SA_transporter"/>
</dbReference>
<dbReference type="NCBIfam" id="TIGR00891">
    <property type="entry name" value="2A0112"/>
    <property type="match status" value="1"/>
</dbReference>
<dbReference type="NCBIfam" id="NF003024">
    <property type="entry name" value="PRK03893.1"/>
    <property type="match status" value="1"/>
</dbReference>
<dbReference type="PANTHER" id="PTHR23508">
    <property type="entry name" value="CARBOXYLIC ACID TRANSPORTER PROTEIN HOMOLOG"/>
    <property type="match status" value="1"/>
</dbReference>
<dbReference type="PANTHER" id="PTHR23508:SF3">
    <property type="entry name" value="SIALIC ACID TRANSPORTER NANT"/>
    <property type="match status" value="1"/>
</dbReference>
<dbReference type="Pfam" id="PF07690">
    <property type="entry name" value="MFS_1"/>
    <property type="match status" value="1"/>
</dbReference>
<dbReference type="SUPFAM" id="SSF103473">
    <property type="entry name" value="MFS general substrate transporter"/>
    <property type="match status" value="1"/>
</dbReference>
<dbReference type="PROSITE" id="PS50850">
    <property type="entry name" value="MFS"/>
    <property type="match status" value="1"/>
</dbReference>
<proteinExistence type="inferred from homology"/>
<name>NANT_SALTI</name>
<keyword id="KW-0997">Cell inner membrane</keyword>
<keyword id="KW-1003">Cell membrane</keyword>
<keyword id="KW-0472">Membrane</keyword>
<keyword id="KW-0762">Sugar transport</keyword>
<keyword id="KW-0812">Transmembrane</keyword>
<keyword id="KW-1133">Transmembrane helix</keyword>
<keyword id="KW-0813">Transport</keyword>